<organism>
    <name type="scientific">Nitrobacter winogradskyi (strain ATCC 25391 / DSM 10237 / CIP 104748 / NCIMB 11846 / Nb-255)</name>
    <dbReference type="NCBI Taxonomy" id="323098"/>
    <lineage>
        <taxon>Bacteria</taxon>
        <taxon>Pseudomonadati</taxon>
        <taxon>Pseudomonadota</taxon>
        <taxon>Alphaproteobacteria</taxon>
        <taxon>Hyphomicrobiales</taxon>
        <taxon>Nitrobacteraceae</taxon>
        <taxon>Nitrobacter</taxon>
    </lineage>
</organism>
<accession>Q3SRS9</accession>
<dbReference type="EC" id="4.2.1.10" evidence="1"/>
<dbReference type="EMBL" id="CP000115">
    <property type="protein sequence ID" value="ABA05012.1"/>
    <property type="molecule type" value="Genomic_DNA"/>
</dbReference>
<dbReference type="RefSeq" id="WP_011315008.1">
    <property type="nucleotide sequence ID" value="NC_007406.1"/>
</dbReference>
<dbReference type="SMR" id="Q3SRS9"/>
<dbReference type="STRING" id="323098.Nwi_1751"/>
<dbReference type="KEGG" id="nwi:Nwi_1751"/>
<dbReference type="eggNOG" id="COG0757">
    <property type="taxonomic scope" value="Bacteria"/>
</dbReference>
<dbReference type="HOGENOM" id="CLU_090968_2_0_5"/>
<dbReference type="OrthoDB" id="9790793at2"/>
<dbReference type="UniPathway" id="UPA00053">
    <property type="reaction ID" value="UER00086"/>
</dbReference>
<dbReference type="Proteomes" id="UP000002531">
    <property type="component" value="Chromosome"/>
</dbReference>
<dbReference type="GO" id="GO:0003855">
    <property type="term" value="F:3-dehydroquinate dehydratase activity"/>
    <property type="evidence" value="ECO:0007669"/>
    <property type="project" value="UniProtKB-UniRule"/>
</dbReference>
<dbReference type="GO" id="GO:0008652">
    <property type="term" value="P:amino acid biosynthetic process"/>
    <property type="evidence" value="ECO:0007669"/>
    <property type="project" value="UniProtKB-KW"/>
</dbReference>
<dbReference type="GO" id="GO:0009073">
    <property type="term" value="P:aromatic amino acid family biosynthetic process"/>
    <property type="evidence" value="ECO:0007669"/>
    <property type="project" value="UniProtKB-KW"/>
</dbReference>
<dbReference type="GO" id="GO:0009423">
    <property type="term" value="P:chorismate biosynthetic process"/>
    <property type="evidence" value="ECO:0007669"/>
    <property type="project" value="UniProtKB-UniRule"/>
</dbReference>
<dbReference type="GO" id="GO:0019631">
    <property type="term" value="P:quinate catabolic process"/>
    <property type="evidence" value="ECO:0007669"/>
    <property type="project" value="TreeGrafter"/>
</dbReference>
<dbReference type="CDD" id="cd00466">
    <property type="entry name" value="DHQase_II"/>
    <property type="match status" value="1"/>
</dbReference>
<dbReference type="Gene3D" id="3.40.50.9100">
    <property type="entry name" value="Dehydroquinase, class II"/>
    <property type="match status" value="1"/>
</dbReference>
<dbReference type="HAMAP" id="MF_00169">
    <property type="entry name" value="AroQ"/>
    <property type="match status" value="1"/>
</dbReference>
<dbReference type="InterPro" id="IPR001874">
    <property type="entry name" value="DHquinase_II"/>
</dbReference>
<dbReference type="InterPro" id="IPR018509">
    <property type="entry name" value="DHquinase_II_CS"/>
</dbReference>
<dbReference type="InterPro" id="IPR036441">
    <property type="entry name" value="DHquinase_II_sf"/>
</dbReference>
<dbReference type="NCBIfam" id="TIGR01088">
    <property type="entry name" value="aroQ"/>
    <property type="match status" value="1"/>
</dbReference>
<dbReference type="NCBIfam" id="NF003805">
    <property type="entry name" value="PRK05395.1-2"/>
    <property type="match status" value="1"/>
</dbReference>
<dbReference type="NCBIfam" id="NF003806">
    <property type="entry name" value="PRK05395.1-3"/>
    <property type="match status" value="1"/>
</dbReference>
<dbReference type="NCBIfam" id="NF003807">
    <property type="entry name" value="PRK05395.1-4"/>
    <property type="match status" value="1"/>
</dbReference>
<dbReference type="PANTHER" id="PTHR21272">
    <property type="entry name" value="CATABOLIC 3-DEHYDROQUINASE"/>
    <property type="match status" value="1"/>
</dbReference>
<dbReference type="PANTHER" id="PTHR21272:SF3">
    <property type="entry name" value="CATABOLIC 3-DEHYDROQUINASE"/>
    <property type="match status" value="1"/>
</dbReference>
<dbReference type="Pfam" id="PF01220">
    <property type="entry name" value="DHquinase_II"/>
    <property type="match status" value="1"/>
</dbReference>
<dbReference type="PIRSF" id="PIRSF001399">
    <property type="entry name" value="DHquinase_II"/>
    <property type="match status" value="1"/>
</dbReference>
<dbReference type="SUPFAM" id="SSF52304">
    <property type="entry name" value="Type II 3-dehydroquinate dehydratase"/>
    <property type="match status" value="1"/>
</dbReference>
<dbReference type="PROSITE" id="PS01029">
    <property type="entry name" value="DEHYDROQUINASE_II"/>
    <property type="match status" value="1"/>
</dbReference>
<evidence type="ECO:0000255" key="1">
    <source>
        <dbReference type="HAMAP-Rule" id="MF_00169"/>
    </source>
</evidence>
<keyword id="KW-0028">Amino-acid biosynthesis</keyword>
<keyword id="KW-0057">Aromatic amino acid biosynthesis</keyword>
<keyword id="KW-0456">Lyase</keyword>
<keyword id="KW-1185">Reference proteome</keyword>
<reference key="1">
    <citation type="journal article" date="2006" name="Appl. Environ. Microbiol.">
        <title>Genome sequence of the chemolithoautotrophic nitrite-oxidizing bacterium Nitrobacter winogradskyi Nb-255.</title>
        <authorList>
            <person name="Starkenburg S.R."/>
            <person name="Chain P.S.G."/>
            <person name="Sayavedra-Soto L.A."/>
            <person name="Hauser L."/>
            <person name="Land M.L."/>
            <person name="Larimer F.W."/>
            <person name="Malfatti S.A."/>
            <person name="Klotz M.G."/>
            <person name="Bottomley P.J."/>
            <person name="Arp D.J."/>
            <person name="Hickey W.J."/>
        </authorList>
    </citation>
    <scope>NUCLEOTIDE SEQUENCE [LARGE SCALE GENOMIC DNA]</scope>
    <source>
        <strain>ATCC 25391 / DSM 10237 / CIP 104748 / NCIMB 11846 / Nb-255</strain>
    </source>
</reference>
<sequence>MAKTIYVLNGPNLNMLGTREPDTYGHANLADVEQLCAETAKNFGLAADCRQSNREGELIDFIHEAHAKNAAGIVINAGGYSHTSIALHDALVAVKIPTVEVHISNIHAREDFRHHSFTAKAAFASLSGFGIDGYRLAINGLAAKIGAVDPSNKVKS</sequence>
<proteinExistence type="inferred from homology"/>
<gene>
    <name evidence="1" type="primary">aroQ</name>
    <name type="ordered locus">Nwi_1751</name>
</gene>
<protein>
    <recommendedName>
        <fullName evidence="1">3-dehydroquinate dehydratase</fullName>
        <shortName evidence="1">3-dehydroquinase</shortName>
        <ecNumber evidence="1">4.2.1.10</ecNumber>
    </recommendedName>
    <alternativeName>
        <fullName evidence="1">Type II DHQase</fullName>
    </alternativeName>
</protein>
<feature type="chain" id="PRO_1000023492" description="3-dehydroquinate dehydratase">
    <location>
        <begin position="1"/>
        <end position="156"/>
    </location>
</feature>
<feature type="active site" description="Proton acceptor" evidence="1">
    <location>
        <position position="24"/>
    </location>
</feature>
<feature type="active site" description="Proton donor" evidence="1">
    <location>
        <position position="102"/>
    </location>
</feature>
<feature type="binding site" evidence="1">
    <location>
        <position position="76"/>
    </location>
    <ligand>
        <name>substrate</name>
    </ligand>
</feature>
<feature type="binding site" evidence="1">
    <location>
        <position position="82"/>
    </location>
    <ligand>
        <name>substrate</name>
    </ligand>
</feature>
<feature type="binding site" evidence="1">
    <location>
        <position position="89"/>
    </location>
    <ligand>
        <name>substrate</name>
    </ligand>
</feature>
<feature type="binding site" evidence="1">
    <location>
        <begin position="103"/>
        <end position="104"/>
    </location>
    <ligand>
        <name>substrate</name>
    </ligand>
</feature>
<feature type="binding site" evidence="1">
    <location>
        <position position="113"/>
    </location>
    <ligand>
        <name>substrate</name>
    </ligand>
</feature>
<feature type="site" description="Transition state stabilizer" evidence="1">
    <location>
        <position position="19"/>
    </location>
</feature>
<comment type="function">
    <text evidence="1">Catalyzes a trans-dehydration via an enolate intermediate.</text>
</comment>
<comment type="catalytic activity">
    <reaction evidence="1">
        <text>3-dehydroquinate = 3-dehydroshikimate + H2O</text>
        <dbReference type="Rhea" id="RHEA:21096"/>
        <dbReference type="ChEBI" id="CHEBI:15377"/>
        <dbReference type="ChEBI" id="CHEBI:16630"/>
        <dbReference type="ChEBI" id="CHEBI:32364"/>
        <dbReference type="EC" id="4.2.1.10"/>
    </reaction>
</comment>
<comment type="pathway">
    <text evidence="1">Metabolic intermediate biosynthesis; chorismate biosynthesis; chorismate from D-erythrose 4-phosphate and phosphoenolpyruvate: step 3/7.</text>
</comment>
<comment type="subunit">
    <text evidence="1">Homododecamer.</text>
</comment>
<comment type="similarity">
    <text evidence="1">Belongs to the type-II 3-dehydroquinase family.</text>
</comment>
<name>AROQ_NITWN</name>